<organism>
    <name type="scientific">Synechococcus sp. (strain JA-3-3Ab)</name>
    <name type="common">Cyanobacteria bacterium Yellowstone A-Prime</name>
    <dbReference type="NCBI Taxonomy" id="321327"/>
    <lineage>
        <taxon>Bacteria</taxon>
        <taxon>Bacillati</taxon>
        <taxon>Cyanobacteriota</taxon>
        <taxon>Cyanophyceae</taxon>
        <taxon>Synechococcales</taxon>
        <taxon>Synechococcaceae</taxon>
        <taxon>Synechococcus</taxon>
    </lineage>
</organism>
<proteinExistence type="inferred from homology"/>
<name>RL17_SYNJA</name>
<accession>Q2JUJ6</accession>
<dbReference type="EMBL" id="CP000239">
    <property type="protein sequence ID" value="ABC99618.1"/>
    <property type="molecule type" value="Genomic_DNA"/>
</dbReference>
<dbReference type="RefSeq" id="WP_011430296.1">
    <property type="nucleotide sequence ID" value="NC_007775.1"/>
</dbReference>
<dbReference type="SMR" id="Q2JUJ6"/>
<dbReference type="STRING" id="321327.CYA_1450"/>
<dbReference type="KEGG" id="cya:CYA_1450"/>
<dbReference type="eggNOG" id="COG0203">
    <property type="taxonomic scope" value="Bacteria"/>
</dbReference>
<dbReference type="HOGENOM" id="CLU_074407_2_2_3"/>
<dbReference type="OrthoDB" id="9809073at2"/>
<dbReference type="Proteomes" id="UP000008818">
    <property type="component" value="Chromosome"/>
</dbReference>
<dbReference type="GO" id="GO:0022625">
    <property type="term" value="C:cytosolic large ribosomal subunit"/>
    <property type="evidence" value="ECO:0007669"/>
    <property type="project" value="TreeGrafter"/>
</dbReference>
<dbReference type="GO" id="GO:0003735">
    <property type="term" value="F:structural constituent of ribosome"/>
    <property type="evidence" value="ECO:0007669"/>
    <property type="project" value="InterPro"/>
</dbReference>
<dbReference type="GO" id="GO:0006412">
    <property type="term" value="P:translation"/>
    <property type="evidence" value="ECO:0007669"/>
    <property type="project" value="UniProtKB-UniRule"/>
</dbReference>
<dbReference type="FunFam" id="3.90.1030.10:FF:000001">
    <property type="entry name" value="50S ribosomal protein L17"/>
    <property type="match status" value="1"/>
</dbReference>
<dbReference type="Gene3D" id="3.90.1030.10">
    <property type="entry name" value="Ribosomal protein L17"/>
    <property type="match status" value="1"/>
</dbReference>
<dbReference type="HAMAP" id="MF_01368">
    <property type="entry name" value="Ribosomal_bL17"/>
    <property type="match status" value="1"/>
</dbReference>
<dbReference type="InterPro" id="IPR000456">
    <property type="entry name" value="Ribosomal_bL17"/>
</dbReference>
<dbReference type="InterPro" id="IPR047859">
    <property type="entry name" value="Ribosomal_bL17_CS"/>
</dbReference>
<dbReference type="InterPro" id="IPR036373">
    <property type="entry name" value="Ribosomal_bL17_sf"/>
</dbReference>
<dbReference type="NCBIfam" id="TIGR00059">
    <property type="entry name" value="L17"/>
    <property type="match status" value="1"/>
</dbReference>
<dbReference type="PANTHER" id="PTHR14413:SF16">
    <property type="entry name" value="LARGE RIBOSOMAL SUBUNIT PROTEIN BL17M"/>
    <property type="match status" value="1"/>
</dbReference>
<dbReference type="PANTHER" id="PTHR14413">
    <property type="entry name" value="RIBOSOMAL PROTEIN L17"/>
    <property type="match status" value="1"/>
</dbReference>
<dbReference type="Pfam" id="PF01196">
    <property type="entry name" value="Ribosomal_L17"/>
    <property type="match status" value="1"/>
</dbReference>
<dbReference type="SUPFAM" id="SSF64263">
    <property type="entry name" value="Prokaryotic ribosomal protein L17"/>
    <property type="match status" value="1"/>
</dbReference>
<dbReference type="PROSITE" id="PS01167">
    <property type="entry name" value="RIBOSOMAL_L17"/>
    <property type="match status" value="1"/>
</dbReference>
<keyword id="KW-0687">Ribonucleoprotein</keyword>
<keyword id="KW-0689">Ribosomal protein</keyword>
<sequence length="116" mass="13360">MRHRRRTPHLNKPADQRKALMRALTTALLREGRITTTKARAKAIRATTEKMITLAKDGSLAARRQALAYIYDKELVRSLFEQAPERYRDRPGGYTRILRTVRRRGDGAEMAVIELV</sequence>
<reference key="1">
    <citation type="journal article" date="2007" name="ISME J.">
        <title>Population level functional diversity in a microbial community revealed by comparative genomic and metagenomic analyses.</title>
        <authorList>
            <person name="Bhaya D."/>
            <person name="Grossman A.R."/>
            <person name="Steunou A.-S."/>
            <person name="Khuri N."/>
            <person name="Cohan F.M."/>
            <person name="Hamamura N."/>
            <person name="Melendrez M.C."/>
            <person name="Bateson M.M."/>
            <person name="Ward D.M."/>
            <person name="Heidelberg J.F."/>
        </authorList>
    </citation>
    <scope>NUCLEOTIDE SEQUENCE [LARGE SCALE GENOMIC DNA]</scope>
    <source>
        <strain>JA-3-3Ab</strain>
    </source>
</reference>
<gene>
    <name evidence="1" type="primary">rplQ</name>
    <name evidence="1" type="synonym">rpl17</name>
    <name type="ordered locus">CYA_1450</name>
</gene>
<evidence type="ECO:0000255" key="1">
    <source>
        <dbReference type="HAMAP-Rule" id="MF_01368"/>
    </source>
</evidence>
<evidence type="ECO:0000305" key="2"/>
<comment type="subunit">
    <text evidence="1">Part of the 50S ribosomal subunit. Contacts protein L32.</text>
</comment>
<comment type="similarity">
    <text evidence="1">Belongs to the bacterial ribosomal protein bL17 family.</text>
</comment>
<feature type="chain" id="PRO_0000267955" description="Large ribosomal subunit protein bL17">
    <location>
        <begin position="1"/>
        <end position="116"/>
    </location>
</feature>
<protein>
    <recommendedName>
        <fullName evidence="1">Large ribosomal subunit protein bL17</fullName>
    </recommendedName>
    <alternativeName>
        <fullName evidence="2">50S ribosomal protein L17</fullName>
    </alternativeName>
</protein>